<feature type="chain" id="PRO_0000173702" description="Arginase, hepatic">
    <location>
        <begin position="1"/>
        <end position="323"/>
    </location>
</feature>
<feature type="binding site" evidence="5">
    <location>
        <position position="102"/>
    </location>
    <ligand>
        <name>Mn(2+)</name>
        <dbReference type="ChEBI" id="CHEBI:29035"/>
        <label>1</label>
    </ligand>
</feature>
<feature type="binding site" evidence="5">
    <location>
        <position position="125"/>
    </location>
    <ligand>
        <name>Mn(2+)</name>
        <dbReference type="ChEBI" id="CHEBI:29035"/>
        <label>1</label>
    </ligand>
</feature>
<feature type="binding site" evidence="5">
    <location>
        <position position="125"/>
    </location>
    <ligand>
        <name>Mn(2+)</name>
        <dbReference type="ChEBI" id="CHEBI:29035"/>
        <label>2</label>
    </ligand>
</feature>
<feature type="binding site" evidence="2">
    <location>
        <begin position="127"/>
        <end position="131"/>
    </location>
    <ligand>
        <name>substrate</name>
    </ligand>
</feature>
<feature type="binding site" evidence="5">
    <location>
        <position position="127"/>
    </location>
    <ligand>
        <name>Mn(2+)</name>
        <dbReference type="ChEBI" id="CHEBI:29035"/>
        <label>2</label>
    </ligand>
</feature>
<feature type="binding site" evidence="5">
    <location>
        <position position="129"/>
    </location>
    <ligand>
        <name>Mn(2+)</name>
        <dbReference type="ChEBI" id="CHEBI:29035"/>
        <label>1</label>
    </ligand>
</feature>
<feature type="binding site" evidence="2">
    <location>
        <begin position="138"/>
        <end position="140"/>
    </location>
    <ligand>
        <name>substrate</name>
    </ligand>
</feature>
<feature type="binding site" evidence="2">
    <location>
        <position position="184"/>
    </location>
    <ligand>
        <name>substrate</name>
    </ligand>
</feature>
<feature type="binding site" evidence="5">
    <location>
        <position position="233"/>
    </location>
    <ligand>
        <name>Mn(2+)</name>
        <dbReference type="ChEBI" id="CHEBI:29035"/>
        <label>1</label>
    </ligand>
</feature>
<feature type="binding site" evidence="5">
    <location>
        <position position="233"/>
    </location>
    <ligand>
        <name>Mn(2+)</name>
        <dbReference type="ChEBI" id="CHEBI:29035"/>
        <label>2</label>
    </ligand>
</feature>
<feature type="binding site" evidence="5">
    <location>
        <position position="235"/>
    </location>
    <ligand>
        <name>Mn(2+)</name>
        <dbReference type="ChEBI" id="CHEBI:29035"/>
        <label>2</label>
    </ligand>
</feature>
<feature type="binding site" evidence="3">
    <location>
        <position position="247"/>
    </location>
    <ligand>
        <name>substrate</name>
    </ligand>
</feature>
<feature type="binding site" evidence="4">
    <location>
        <position position="278"/>
    </location>
    <ligand>
        <name>substrate</name>
    </ligand>
</feature>
<feature type="sequence conflict" description="In Ref. 2; BAA07422." evidence="6" ref="2">
    <original>SLRVPD</original>
    <variation>ICVF</variation>
    <location>
        <begin position="316"/>
        <end position="321"/>
    </location>
</feature>
<organism>
    <name type="scientific">Aquarana catesbeiana</name>
    <name type="common">American bullfrog</name>
    <name type="synonym">Rana catesbeiana</name>
    <dbReference type="NCBI Taxonomy" id="8400"/>
    <lineage>
        <taxon>Eukaryota</taxon>
        <taxon>Metazoa</taxon>
        <taxon>Chordata</taxon>
        <taxon>Craniata</taxon>
        <taxon>Vertebrata</taxon>
        <taxon>Euteleostomi</taxon>
        <taxon>Amphibia</taxon>
        <taxon>Batrachia</taxon>
        <taxon>Anura</taxon>
        <taxon>Neobatrachia</taxon>
        <taxon>Ranoidea</taxon>
        <taxon>Ranidae</taxon>
        <taxon>Aquarana</taxon>
    </lineage>
</organism>
<protein>
    <recommendedName>
        <fullName>Arginase, hepatic</fullName>
        <ecNumber evidence="2">3.5.3.1</ecNumber>
    </recommendedName>
</protein>
<keyword id="KW-0056">Arginine metabolism</keyword>
<keyword id="KW-0378">Hydrolase</keyword>
<keyword id="KW-0464">Manganese</keyword>
<keyword id="KW-0479">Metal-binding</keyword>
<keyword id="KW-0835">Urea cycle</keyword>
<name>ARGI_AQUCT</name>
<reference key="1">
    <citation type="book" date="1994" name="Perspectives in comparative endocrinology">
        <title>Reprogramming of gene expression in the liver of Rana catesbeiana tadpoles during spontaneous and thyroid hormone induced metamorphosis.</title>
        <editorList>
            <person name="Davey K.G."/>
            <person name="Peter R.E."/>
            <person name="Tobe S.S."/>
        </editorList>
        <authorList>
            <person name="Atkinson B.G."/>
            <person name="Helbing C.C."/>
            <person name="Chen Y."/>
        </authorList>
    </citation>
    <scope>NUCLEOTIDE SEQUENCE [MRNA]</scope>
    <source>
        <tissue>Liver</tissue>
    </source>
</reference>
<reference key="2">
    <citation type="journal article" date="1995" name="Biochim. Biophys. Acta">
        <title>Cloning of cDNAs encoding argininosuccinate lyase and arginase from Rana catesbeiana liver and regulation of their mRNAs during spontaneous and thyroid hormone-induced metamorphosis.</title>
        <authorList>
            <person name="Iwase K."/>
            <person name="Yamauchi K."/>
            <person name="Ishikawa K."/>
        </authorList>
    </citation>
    <scope>NUCLEOTIDE SEQUENCE [MRNA]</scope>
    <source>
        <tissue>Liver</tissue>
    </source>
</reference>
<comment type="catalytic activity">
    <reaction evidence="2">
        <text>L-arginine + H2O = urea + L-ornithine</text>
        <dbReference type="Rhea" id="RHEA:20569"/>
        <dbReference type="ChEBI" id="CHEBI:15377"/>
        <dbReference type="ChEBI" id="CHEBI:16199"/>
        <dbReference type="ChEBI" id="CHEBI:32682"/>
        <dbReference type="ChEBI" id="CHEBI:46911"/>
        <dbReference type="EC" id="3.5.3.1"/>
    </reaction>
</comment>
<comment type="cofactor">
    <cofactor evidence="5">
        <name>Mn(2+)</name>
        <dbReference type="ChEBI" id="CHEBI:29035"/>
    </cofactor>
    <text evidence="5">Binds 2 manganese ions per subunit.</text>
</comment>
<comment type="pathway">
    <text evidence="2">Nitrogen metabolism; urea cycle; L-ornithine and urea from L-arginine: step 1/1.</text>
</comment>
<comment type="subunit">
    <text evidence="1">Homotrimer.</text>
</comment>
<comment type="similarity">
    <text evidence="5">Belongs to the arginase family.</text>
</comment>
<accession>P49900</accession>
<evidence type="ECO:0000250" key="1"/>
<evidence type="ECO:0000250" key="2">
    <source>
        <dbReference type="UniProtKB" id="P05089"/>
    </source>
</evidence>
<evidence type="ECO:0000250" key="3">
    <source>
        <dbReference type="UniProtKB" id="P53608"/>
    </source>
</evidence>
<evidence type="ECO:0000250" key="4">
    <source>
        <dbReference type="UniProtKB" id="P78540"/>
    </source>
</evidence>
<evidence type="ECO:0000255" key="5">
    <source>
        <dbReference type="PROSITE-ProRule" id="PRU00742"/>
    </source>
</evidence>
<evidence type="ECO:0000305" key="6"/>
<dbReference type="EC" id="3.5.3.1" evidence="2"/>
<dbReference type="EMBL" id="U26351">
    <property type="protein sequence ID" value="AAA68073.1"/>
    <property type="molecule type" value="mRNA"/>
</dbReference>
<dbReference type="EMBL" id="D38303">
    <property type="protein sequence ID" value="BAA07422.1"/>
    <property type="molecule type" value="mRNA"/>
</dbReference>
<dbReference type="PIR" id="S52134">
    <property type="entry name" value="S52134"/>
</dbReference>
<dbReference type="SMR" id="P49900"/>
<dbReference type="UniPathway" id="UPA00158">
    <property type="reaction ID" value="UER00270"/>
</dbReference>
<dbReference type="GO" id="GO:0005829">
    <property type="term" value="C:cytosol"/>
    <property type="evidence" value="ECO:0007669"/>
    <property type="project" value="TreeGrafter"/>
</dbReference>
<dbReference type="GO" id="GO:0005634">
    <property type="term" value="C:nucleus"/>
    <property type="evidence" value="ECO:0007669"/>
    <property type="project" value="TreeGrafter"/>
</dbReference>
<dbReference type="GO" id="GO:0004053">
    <property type="term" value="F:arginase activity"/>
    <property type="evidence" value="ECO:0007669"/>
    <property type="project" value="UniProtKB-EC"/>
</dbReference>
<dbReference type="GO" id="GO:0030145">
    <property type="term" value="F:manganese ion binding"/>
    <property type="evidence" value="ECO:0007669"/>
    <property type="project" value="TreeGrafter"/>
</dbReference>
<dbReference type="GO" id="GO:0019547">
    <property type="term" value="P:arginine catabolic process to ornithine"/>
    <property type="evidence" value="ECO:0007669"/>
    <property type="project" value="TreeGrafter"/>
</dbReference>
<dbReference type="GO" id="GO:0000050">
    <property type="term" value="P:urea cycle"/>
    <property type="evidence" value="ECO:0007669"/>
    <property type="project" value="UniProtKB-UniPathway"/>
</dbReference>
<dbReference type="CDD" id="cd09989">
    <property type="entry name" value="Arginase"/>
    <property type="match status" value="1"/>
</dbReference>
<dbReference type="FunFam" id="3.40.800.10:FF:000005">
    <property type="entry name" value="Arginase"/>
    <property type="match status" value="1"/>
</dbReference>
<dbReference type="Gene3D" id="3.40.800.10">
    <property type="entry name" value="Ureohydrolase domain"/>
    <property type="match status" value="1"/>
</dbReference>
<dbReference type="InterPro" id="IPR014033">
    <property type="entry name" value="Arginase"/>
</dbReference>
<dbReference type="InterPro" id="IPR006035">
    <property type="entry name" value="Ureohydrolase"/>
</dbReference>
<dbReference type="InterPro" id="IPR023696">
    <property type="entry name" value="Ureohydrolase_dom_sf"/>
</dbReference>
<dbReference type="InterPro" id="IPR020855">
    <property type="entry name" value="Ureohydrolase_Mn_BS"/>
</dbReference>
<dbReference type="NCBIfam" id="TIGR01229">
    <property type="entry name" value="rocF_arginase"/>
    <property type="match status" value="1"/>
</dbReference>
<dbReference type="PANTHER" id="PTHR43782">
    <property type="entry name" value="ARGINASE"/>
    <property type="match status" value="1"/>
</dbReference>
<dbReference type="PANTHER" id="PTHR43782:SF2">
    <property type="entry name" value="ARGINASE-1"/>
    <property type="match status" value="1"/>
</dbReference>
<dbReference type="Pfam" id="PF00491">
    <property type="entry name" value="Arginase"/>
    <property type="match status" value="1"/>
</dbReference>
<dbReference type="PIRSF" id="PIRSF036979">
    <property type="entry name" value="Arginase"/>
    <property type="match status" value="1"/>
</dbReference>
<dbReference type="PRINTS" id="PR00116">
    <property type="entry name" value="ARGINASE"/>
</dbReference>
<dbReference type="SUPFAM" id="SSF52768">
    <property type="entry name" value="Arginase/deacetylase"/>
    <property type="match status" value="1"/>
</dbReference>
<dbReference type="PROSITE" id="PS01053">
    <property type="entry name" value="ARGINASE_1"/>
    <property type="match status" value="1"/>
</dbReference>
<dbReference type="PROSITE" id="PS51409">
    <property type="entry name" value="ARGINASE_2"/>
    <property type="match status" value="1"/>
</dbReference>
<sequence>MSERTKRSVGVLGAPFSKGQARGGVEEGPIYIRRAGLIEKLEELEYEVRDYGDLHFPELPCDEPFQNVKNPRTVGQAAEKVANAVSEVKRSGRVCLTLGGDHSLAVGTITGHAKVHPDLCVVWVDAHADINTPITSPSGNLHGQPVSFLIRELQTKVPAIPGFSWVQPSLSAKDIVYIGLRDVDPGEHYILKTLGIKSYSMSDVDRLTINKVMEETIEFLVGKKKRPIHLSFDIDGLDPSVAPATGTPVPGGLTYREGMYITEQLYNTGLLSAVDMMEVNPSRGETERESKLTVNTSLNMILSCFGKAREGFHASSLRVPDLI</sequence>
<proteinExistence type="evidence at transcript level"/>